<organism>
    <name type="scientific">Xerospermophilus spilosoma</name>
    <name type="common">Spotted ground squirrel</name>
    <name type="synonym">Spermophilus spilosoma</name>
    <dbReference type="NCBI Taxonomy" id="45471"/>
    <lineage>
        <taxon>Eukaryota</taxon>
        <taxon>Metazoa</taxon>
        <taxon>Chordata</taxon>
        <taxon>Craniata</taxon>
        <taxon>Vertebrata</taxon>
        <taxon>Euteleostomi</taxon>
        <taxon>Mammalia</taxon>
        <taxon>Eutheria</taxon>
        <taxon>Euarchontoglires</taxon>
        <taxon>Glires</taxon>
        <taxon>Rodentia</taxon>
        <taxon>Sciuromorpha</taxon>
        <taxon>Sciuridae</taxon>
        <taxon>Xerinae</taxon>
        <taxon>Marmotini</taxon>
        <taxon>Xerospermophilus</taxon>
    </lineage>
</organism>
<name>CYB_XERSI</name>
<geneLocation type="mitochondrion"/>
<dbReference type="EMBL" id="AF157845">
    <property type="protein sequence ID" value="AAD50129.1"/>
    <property type="molecule type" value="Genomic_DNA"/>
</dbReference>
<dbReference type="SMR" id="Q9TF93"/>
<dbReference type="GO" id="GO:0005743">
    <property type="term" value="C:mitochondrial inner membrane"/>
    <property type="evidence" value="ECO:0007669"/>
    <property type="project" value="UniProtKB-SubCell"/>
</dbReference>
<dbReference type="GO" id="GO:0045275">
    <property type="term" value="C:respiratory chain complex III"/>
    <property type="evidence" value="ECO:0007669"/>
    <property type="project" value="InterPro"/>
</dbReference>
<dbReference type="GO" id="GO:0046872">
    <property type="term" value="F:metal ion binding"/>
    <property type="evidence" value="ECO:0007669"/>
    <property type="project" value="UniProtKB-KW"/>
</dbReference>
<dbReference type="GO" id="GO:0008121">
    <property type="term" value="F:ubiquinol-cytochrome-c reductase activity"/>
    <property type="evidence" value="ECO:0007669"/>
    <property type="project" value="InterPro"/>
</dbReference>
<dbReference type="GO" id="GO:0006122">
    <property type="term" value="P:mitochondrial electron transport, ubiquinol to cytochrome c"/>
    <property type="evidence" value="ECO:0007669"/>
    <property type="project" value="TreeGrafter"/>
</dbReference>
<dbReference type="CDD" id="cd00290">
    <property type="entry name" value="cytochrome_b_C"/>
    <property type="match status" value="1"/>
</dbReference>
<dbReference type="CDD" id="cd00284">
    <property type="entry name" value="Cytochrome_b_N"/>
    <property type="match status" value="1"/>
</dbReference>
<dbReference type="FunFam" id="1.20.810.10:FF:000002">
    <property type="entry name" value="Cytochrome b"/>
    <property type="match status" value="1"/>
</dbReference>
<dbReference type="Gene3D" id="1.20.810.10">
    <property type="entry name" value="Cytochrome Bc1 Complex, Chain C"/>
    <property type="match status" value="1"/>
</dbReference>
<dbReference type="InterPro" id="IPR005798">
    <property type="entry name" value="Cyt_b/b6_C"/>
</dbReference>
<dbReference type="InterPro" id="IPR036150">
    <property type="entry name" value="Cyt_b/b6_C_sf"/>
</dbReference>
<dbReference type="InterPro" id="IPR005797">
    <property type="entry name" value="Cyt_b/b6_N"/>
</dbReference>
<dbReference type="InterPro" id="IPR027387">
    <property type="entry name" value="Cytb/b6-like_sf"/>
</dbReference>
<dbReference type="InterPro" id="IPR030689">
    <property type="entry name" value="Cytochrome_b"/>
</dbReference>
<dbReference type="InterPro" id="IPR048260">
    <property type="entry name" value="Cytochrome_b_C_euk/bac"/>
</dbReference>
<dbReference type="InterPro" id="IPR048259">
    <property type="entry name" value="Cytochrome_b_N_euk/bac"/>
</dbReference>
<dbReference type="InterPro" id="IPR016174">
    <property type="entry name" value="Di-haem_cyt_TM"/>
</dbReference>
<dbReference type="PANTHER" id="PTHR19271">
    <property type="entry name" value="CYTOCHROME B"/>
    <property type="match status" value="1"/>
</dbReference>
<dbReference type="PANTHER" id="PTHR19271:SF16">
    <property type="entry name" value="CYTOCHROME B"/>
    <property type="match status" value="1"/>
</dbReference>
<dbReference type="Pfam" id="PF00032">
    <property type="entry name" value="Cytochrom_B_C"/>
    <property type="match status" value="1"/>
</dbReference>
<dbReference type="Pfam" id="PF00033">
    <property type="entry name" value="Cytochrome_B"/>
    <property type="match status" value="1"/>
</dbReference>
<dbReference type="PIRSF" id="PIRSF038885">
    <property type="entry name" value="COB"/>
    <property type="match status" value="1"/>
</dbReference>
<dbReference type="SUPFAM" id="SSF81648">
    <property type="entry name" value="a domain/subunit of cytochrome bc1 complex (Ubiquinol-cytochrome c reductase)"/>
    <property type="match status" value="1"/>
</dbReference>
<dbReference type="SUPFAM" id="SSF81342">
    <property type="entry name" value="Transmembrane di-heme cytochromes"/>
    <property type="match status" value="1"/>
</dbReference>
<dbReference type="PROSITE" id="PS51003">
    <property type="entry name" value="CYTB_CTER"/>
    <property type="match status" value="1"/>
</dbReference>
<dbReference type="PROSITE" id="PS51002">
    <property type="entry name" value="CYTB_NTER"/>
    <property type="match status" value="1"/>
</dbReference>
<keyword id="KW-0249">Electron transport</keyword>
<keyword id="KW-0349">Heme</keyword>
<keyword id="KW-0408">Iron</keyword>
<keyword id="KW-0472">Membrane</keyword>
<keyword id="KW-0479">Metal-binding</keyword>
<keyword id="KW-0496">Mitochondrion</keyword>
<keyword id="KW-0999">Mitochondrion inner membrane</keyword>
<keyword id="KW-0679">Respiratory chain</keyword>
<keyword id="KW-0812">Transmembrane</keyword>
<keyword id="KW-1133">Transmembrane helix</keyword>
<keyword id="KW-0813">Transport</keyword>
<keyword id="KW-0830">Ubiquinone</keyword>
<gene>
    <name type="primary">MT-CYB</name>
    <name type="synonym">COB</name>
    <name type="synonym">CYTB</name>
    <name type="synonym">MTCYB</name>
</gene>
<proteinExistence type="inferred from homology"/>
<accession>Q9TF93</accession>
<reference key="1">
    <citation type="submission" date="1999-06" db="EMBL/GenBank/DDBJ databases">
        <title>A molecular phylogeny of ground squirrels and prairie dogs.</title>
        <authorList>
            <person name="Harrison R.G."/>
            <person name="Sherman P.W."/>
            <person name="Yensen E."/>
            <person name="Hoffmann R.S."/>
            <person name="Bogdanowicz S.M."/>
        </authorList>
    </citation>
    <scope>NUCLEOTIDE SEQUENCE [GENOMIC DNA]</scope>
    <source>
        <strain>Isolate S105</strain>
    </source>
</reference>
<sequence>MTNTRKTHPLIKIINHSFIDLPAPSNISAWWNFGSLLGLCLAIQILTGLFLAMHYTSDTMTAFSSVTHICRDVNYGWLIRYIHANGASMFFICLFLHVGRGLYYGSYSYFETWNIGVILLFAVMATAFMGYVLPWGQMSFWGATVITNLLSAIPYIGTTLVEWIWGGFSVDKATLTRFFAFHFILPFIIAALVMVHLLFLHETGSNNPSGLVSDSDKIPFHPYYTIKDILGILLLIMALMTLILFSPDLLGDPDNYTPANPLSTPPHIKPEWYFLFAYAILRSIPNKLGGVLALVFSILILMLFPLLHLSKQRSMMFRPLSQCMFWILVADLFTLTWIGGQPVEYPFIIIGQLASILYFTIILLILPTVSLIENKLLKW</sequence>
<comment type="function">
    <text evidence="2">Component of the ubiquinol-cytochrome c reductase complex (complex III or cytochrome b-c1 complex) that is part of the mitochondrial respiratory chain. The b-c1 complex mediates electron transfer from ubiquinol to cytochrome c. Contributes to the generation of a proton gradient across the mitochondrial membrane that is then used for ATP synthesis.</text>
</comment>
<comment type="cofactor">
    <cofactor evidence="2">
        <name>heme b</name>
        <dbReference type="ChEBI" id="CHEBI:60344"/>
    </cofactor>
    <text evidence="2">Binds 2 heme b groups non-covalently.</text>
</comment>
<comment type="subunit">
    <text evidence="2">The cytochrome bc1 complex contains 11 subunits: 3 respiratory subunits (MT-CYB, CYC1 and UQCRFS1), 2 core proteins (UQCRC1 and UQCRC2) and 6 low-molecular weight proteins (UQCRH/QCR6, UQCRB/QCR7, UQCRQ/QCR8, UQCR10/QCR9, UQCR11/QCR10 and a cleavage product of UQCRFS1). This cytochrome bc1 complex then forms a dimer.</text>
</comment>
<comment type="subcellular location">
    <subcellularLocation>
        <location evidence="2">Mitochondrion inner membrane</location>
        <topology evidence="2">Multi-pass membrane protein</topology>
    </subcellularLocation>
</comment>
<comment type="miscellaneous">
    <text evidence="1">Heme 1 (or BL or b562) is low-potential and absorbs at about 562 nm, and heme 2 (or BH or b566) is high-potential and absorbs at about 566 nm.</text>
</comment>
<comment type="similarity">
    <text evidence="3 4">Belongs to the cytochrome b family.</text>
</comment>
<comment type="caution">
    <text evidence="2">The full-length protein contains only eight transmembrane helices, not nine as predicted by bioinformatics tools.</text>
</comment>
<evidence type="ECO:0000250" key="1"/>
<evidence type="ECO:0000250" key="2">
    <source>
        <dbReference type="UniProtKB" id="P00157"/>
    </source>
</evidence>
<evidence type="ECO:0000255" key="3">
    <source>
        <dbReference type="PROSITE-ProRule" id="PRU00967"/>
    </source>
</evidence>
<evidence type="ECO:0000255" key="4">
    <source>
        <dbReference type="PROSITE-ProRule" id="PRU00968"/>
    </source>
</evidence>
<protein>
    <recommendedName>
        <fullName>Cytochrome b</fullName>
    </recommendedName>
    <alternativeName>
        <fullName>Complex III subunit 3</fullName>
    </alternativeName>
    <alternativeName>
        <fullName>Complex III subunit III</fullName>
    </alternativeName>
    <alternativeName>
        <fullName>Cytochrome b-c1 complex subunit 3</fullName>
    </alternativeName>
    <alternativeName>
        <fullName>Ubiquinol-cytochrome-c reductase complex cytochrome b subunit</fullName>
    </alternativeName>
</protein>
<feature type="chain" id="PRO_0000061603" description="Cytochrome b">
    <location>
        <begin position="1"/>
        <end position="379"/>
    </location>
</feature>
<feature type="transmembrane region" description="Helical" evidence="2">
    <location>
        <begin position="33"/>
        <end position="53"/>
    </location>
</feature>
<feature type="transmembrane region" description="Helical" evidence="2">
    <location>
        <begin position="77"/>
        <end position="98"/>
    </location>
</feature>
<feature type="transmembrane region" description="Helical" evidence="2">
    <location>
        <begin position="113"/>
        <end position="133"/>
    </location>
</feature>
<feature type="transmembrane region" description="Helical" evidence="2">
    <location>
        <begin position="178"/>
        <end position="198"/>
    </location>
</feature>
<feature type="transmembrane region" description="Helical" evidence="2">
    <location>
        <begin position="226"/>
        <end position="246"/>
    </location>
</feature>
<feature type="transmembrane region" description="Helical" evidence="2">
    <location>
        <begin position="288"/>
        <end position="308"/>
    </location>
</feature>
<feature type="transmembrane region" description="Helical" evidence="2">
    <location>
        <begin position="320"/>
        <end position="340"/>
    </location>
</feature>
<feature type="transmembrane region" description="Helical" evidence="2">
    <location>
        <begin position="347"/>
        <end position="367"/>
    </location>
</feature>
<feature type="binding site" description="axial binding residue" evidence="2">
    <location>
        <position position="83"/>
    </location>
    <ligand>
        <name>heme b</name>
        <dbReference type="ChEBI" id="CHEBI:60344"/>
        <label>b562</label>
    </ligand>
    <ligandPart>
        <name>Fe</name>
        <dbReference type="ChEBI" id="CHEBI:18248"/>
    </ligandPart>
</feature>
<feature type="binding site" description="axial binding residue" evidence="2">
    <location>
        <position position="97"/>
    </location>
    <ligand>
        <name>heme b</name>
        <dbReference type="ChEBI" id="CHEBI:60344"/>
        <label>b566</label>
    </ligand>
    <ligandPart>
        <name>Fe</name>
        <dbReference type="ChEBI" id="CHEBI:18248"/>
    </ligandPart>
</feature>
<feature type="binding site" description="axial binding residue" evidence="2">
    <location>
        <position position="182"/>
    </location>
    <ligand>
        <name>heme b</name>
        <dbReference type="ChEBI" id="CHEBI:60344"/>
        <label>b562</label>
    </ligand>
    <ligandPart>
        <name>Fe</name>
        <dbReference type="ChEBI" id="CHEBI:18248"/>
    </ligandPart>
</feature>
<feature type="binding site" description="axial binding residue" evidence="2">
    <location>
        <position position="196"/>
    </location>
    <ligand>
        <name>heme b</name>
        <dbReference type="ChEBI" id="CHEBI:60344"/>
        <label>b566</label>
    </ligand>
    <ligandPart>
        <name>Fe</name>
        <dbReference type="ChEBI" id="CHEBI:18248"/>
    </ligandPart>
</feature>
<feature type="binding site" evidence="2">
    <location>
        <position position="201"/>
    </location>
    <ligand>
        <name>a ubiquinone</name>
        <dbReference type="ChEBI" id="CHEBI:16389"/>
    </ligand>
</feature>